<comment type="function">
    <text evidence="1">Functions in complex with FlhC as a master transcriptional regulator that regulates transcription of several flagellar and non-flagellar operons by binding to their promoter region. Activates expression of class 2 flagellar genes, including fliA, which is a flagellum-specific sigma factor that turns on the class 3 genes. Also regulates genes whose products function in a variety of physiological pathways.</text>
</comment>
<comment type="subunit">
    <text evidence="1">Homodimer; disulfide-linked. Forms a heterohexamer composed of two FlhC and four FlhD subunits. Each FlhC binds a FlhD dimer, forming a heterotrimer, and a hexamer assembles by dimerization of two heterotrimers.</text>
</comment>
<comment type="subcellular location">
    <subcellularLocation>
        <location evidence="1">Cytoplasm</location>
    </subcellularLocation>
</comment>
<comment type="domain">
    <text evidence="1">The C-terminal region contains a putative helix-turn-helix (HTH) motif, suggesting that this region may bind DNA.</text>
</comment>
<comment type="similarity">
    <text evidence="1">Belongs to the FlhD family.</text>
</comment>
<feature type="chain" id="PRO_1000132694" description="Flagellar transcriptional regulator FlhD">
    <location>
        <begin position="1"/>
        <end position="113"/>
    </location>
</feature>
<feature type="disulfide bond" description="Interchain" evidence="1">
    <location>
        <position position="65"/>
    </location>
</feature>
<proteinExistence type="inferred from homology"/>
<reference key="1">
    <citation type="journal article" date="2011" name="J. Bacteriol.">
        <title>Comparative genomics of 28 Salmonella enterica isolates: evidence for CRISPR-mediated adaptive sublineage evolution.</title>
        <authorList>
            <person name="Fricke W.F."/>
            <person name="Mammel M.K."/>
            <person name="McDermott P.F."/>
            <person name="Tartera C."/>
            <person name="White D.G."/>
            <person name="Leclerc J.E."/>
            <person name="Ravel J."/>
            <person name="Cebula T.A."/>
        </authorList>
    </citation>
    <scope>NUCLEOTIDE SEQUENCE [LARGE SCALE GENOMIC DNA]</scope>
    <source>
        <strain>SL254</strain>
    </source>
</reference>
<organism>
    <name type="scientific">Salmonella newport (strain SL254)</name>
    <dbReference type="NCBI Taxonomy" id="423368"/>
    <lineage>
        <taxon>Bacteria</taxon>
        <taxon>Pseudomonadati</taxon>
        <taxon>Pseudomonadota</taxon>
        <taxon>Gammaproteobacteria</taxon>
        <taxon>Enterobacterales</taxon>
        <taxon>Enterobacteriaceae</taxon>
        <taxon>Salmonella</taxon>
    </lineage>
</organism>
<name>FLHD_SALNS</name>
<sequence length="113" mass="13006">MHTSELLKHIYDINLSYLLLAQRLIVQDKASAMFRLGINEEMANTLGALTLPQMVKLAETNQLVCHFRFDDHQTITRLTQDSRVDDLQQIHTGIMLSTRLLNEVDDTARKKRA</sequence>
<protein>
    <recommendedName>
        <fullName evidence="1">Flagellar transcriptional regulator FlhD</fullName>
    </recommendedName>
</protein>
<gene>
    <name evidence="1" type="primary">flhD</name>
    <name type="ordered locus">SNSL254_A2086</name>
</gene>
<accession>B4SW34</accession>
<evidence type="ECO:0000255" key="1">
    <source>
        <dbReference type="HAMAP-Rule" id="MF_00725"/>
    </source>
</evidence>
<dbReference type="EMBL" id="CP001113">
    <property type="protein sequence ID" value="ACF63144.1"/>
    <property type="molecule type" value="Genomic_DNA"/>
</dbReference>
<dbReference type="RefSeq" id="WP_001518146.1">
    <property type="nucleotide sequence ID" value="NZ_CCMR01000003.1"/>
</dbReference>
<dbReference type="SMR" id="B4SW34"/>
<dbReference type="KEGG" id="see:SNSL254_A2086"/>
<dbReference type="HOGENOM" id="CLU_144160_0_0_6"/>
<dbReference type="Proteomes" id="UP000008824">
    <property type="component" value="Chromosome"/>
</dbReference>
<dbReference type="GO" id="GO:0005737">
    <property type="term" value="C:cytoplasm"/>
    <property type="evidence" value="ECO:0007669"/>
    <property type="project" value="UniProtKB-SubCell"/>
</dbReference>
<dbReference type="GO" id="GO:0003677">
    <property type="term" value="F:DNA binding"/>
    <property type="evidence" value="ECO:0007669"/>
    <property type="project" value="UniProtKB-UniRule"/>
</dbReference>
<dbReference type="GO" id="GO:0044780">
    <property type="term" value="P:bacterial-type flagellum assembly"/>
    <property type="evidence" value="ECO:0007669"/>
    <property type="project" value="InterPro"/>
</dbReference>
<dbReference type="GO" id="GO:0045893">
    <property type="term" value="P:positive regulation of DNA-templated transcription"/>
    <property type="evidence" value="ECO:0007669"/>
    <property type="project" value="InterPro"/>
</dbReference>
<dbReference type="GO" id="GO:1902208">
    <property type="term" value="P:regulation of bacterial-type flagellum assembly"/>
    <property type="evidence" value="ECO:0007669"/>
    <property type="project" value="UniProtKB-UniRule"/>
</dbReference>
<dbReference type="Gene3D" id="1.10.4000.10">
    <property type="entry name" value="Flagellar transcriptional activator FlhD"/>
    <property type="match status" value="1"/>
</dbReference>
<dbReference type="HAMAP" id="MF_00725">
    <property type="entry name" value="FlhD"/>
    <property type="match status" value="1"/>
</dbReference>
<dbReference type="InterPro" id="IPR023559">
    <property type="entry name" value="Flagellar_FlhD"/>
</dbReference>
<dbReference type="InterPro" id="IPR036194">
    <property type="entry name" value="FlhD_sf"/>
</dbReference>
<dbReference type="NCBIfam" id="NF002783">
    <property type="entry name" value="PRK02909.1-1"/>
    <property type="match status" value="1"/>
</dbReference>
<dbReference type="Pfam" id="PF05247">
    <property type="entry name" value="FlhD"/>
    <property type="match status" value="1"/>
</dbReference>
<dbReference type="SUPFAM" id="SSF63592">
    <property type="entry name" value="Flagellar transcriptional activator FlhD"/>
    <property type="match status" value="1"/>
</dbReference>
<keyword id="KW-0010">Activator</keyword>
<keyword id="KW-1005">Bacterial flagellum biogenesis</keyword>
<keyword id="KW-0963">Cytoplasm</keyword>
<keyword id="KW-1015">Disulfide bond</keyword>
<keyword id="KW-0238">DNA-binding</keyword>
<keyword id="KW-0804">Transcription</keyword>
<keyword id="KW-0805">Transcription regulation</keyword>